<name>BBR1_SCHCO</name>
<sequence>MHPEFAPVAFLSAASLALPLPWHWRAGNVATLSIIAWLFIMNMIYGINAVIWAGSARITAVVYCDITTKLTIGGNFALPAACLCLCIHLERVASVRAAQTTAADKRRRTIFELAMCWLLPIIFMALHYVVQGHRFDIVEDFGCRPATYYSIPAIFIVWVPPLTMAAASLVYASLAIRHFMHRRLSFAMHLQARSSALTTSRYLRLILMAIVQLVWLVVTTAYTLWFSSMTLNLRPWTTWADVHSNFGRIQTWPAIITPAVILRGACTLWWMVPASTWIFVAFFAFGNDAVEEYKRVLNVVLSGARRALPEGFLSEKKRDLKGFSLPSFVKGSVPLGDSSSSTRKDSLPDKAVLPVNRSVTMTTTTSTVVSSMPPPYSLPPPPPPQKYTSPLDSLDYSADADRISISSSVDTSGYTIEILPETPSTSSSTPPSPSSPQYPRSPSSQGSHVVDDYYYTSSPQDSLPHDIPAPPSLPPPTHMPDEAHISPSHAVPSRPPAFPPYPFARDMRPAASEPMSPRPITYPSMSPTHRDIASVFPGGRR</sequence>
<organism>
    <name type="scientific">Schizophyllum commune</name>
    <name type="common">Split gill fungus</name>
    <dbReference type="NCBI Taxonomy" id="5334"/>
    <lineage>
        <taxon>Eukaryota</taxon>
        <taxon>Fungi</taxon>
        <taxon>Dikarya</taxon>
        <taxon>Basidiomycota</taxon>
        <taxon>Agaricomycotina</taxon>
        <taxon>Agaricomycetes</taxon>
        <taxon>Agaricomycetidae</taxon>
        <taxon>Agaricales</taxon>
        <taxon>Schizophyllaceae</taxon>
        <taxon>Schizophyllum</taxon>
    </lineage>
</organism>
<protein>
    <recommendedName>
        <fullName>Pheromone B beta 1 receptor</fullName>
    </recommendedName>
</protein>
<gene>
    <name type="primary">BBR1</name>
</gene>
<dbReference type="EMBL" id="U74495">
    <property type="protein sequence ID" value="AAB41858.2"/>
    <property type="molecule type" value="Genomic_DNA"/>
</dbReference>
<dbReference type="VEuPathDB" id="FungiDB:SCHCODRAFT_01238578"/>
<dbReference type="GO" id="GO:0005886">
    <property type="term" value="C:plasma membrane"/>
    <property type="evidence" value="ECO:0007669"/>
    <property type="project" value="TreeGrafter"/>
</dbReference>
<dbReference type="GO" id="GO:0004933">
    <property type="term" value="F:mating-type a-factor pheromone receptor activity"/>
    <property type="evidence" value="ECO:0007669"/>
    <property type="project" value="InterPro"/>
</dbReference>
<dbReference type="GO" id="GO:0000750">
    <property type="term" value="P:pheromone-dependent signal transduction involved in conjugation with cellular fusion"/>
    <property type="evidence" value="ECO:0007669"/>
    <property type="project" value="TreeGrafter"/>
</dbReference>
<dbReference type="CDD" id="cd14966">
    <property type="entry name" value="7tmD_STE3"/>
    <property type="match status" value="1"/>
</dbReference>
<dbReference type="InterPro" id="IPR001546">
    <property type="entry name" value="GPCR_Pheromne_A_rcpt"/>
</dbReference>
<dbReference type="InterPro" id="IPR001499">
    <property type="entry name" value="GPCR_STE3"/>
</dbReference>
<dbReference type="PANTHER" id="PTHR28097">
    <property type="entry name" value="PHEROMONE A FACTOR RECEPTOR"/>
    <property type="match status" value="1"/>
</dbReference>
<dbReference type="PANTHER" id="PTHR28097:SF1">
    <property type="entry name" value="PHEROMONE A FACTOR RECEPTOR"/>
    <property type="match status" value="1"/>
</dbReference>
<dbReference type="Pfam" id="PF02076">
    <property type="entry name" value="STE3"/>
    <property type="match status" value="1"/>
</dbReference>
<dbReference type="PRINTS" id="PR00899">
    <property type="entry name" value="GPCRSTE3"/>
</dbReference>
<dbReference type="PRINTS" id="PR00900">
    <property type="entry name" value="PHEROMONEAR"/>
</dbReference>
<proteinExistence type="inferred from homology"/>
<comment type="function">
    <text>Receptor for the BBP1 pheromone, a prenylated mating factor.</text>
</comment>
<comment type="subcellular location">
    <subcellularLocation>
        <location>Membrane</location>
        <topology>Multi-pass membrane protein</topology>
    </subcellularLocation>
</comment>
<comment type="similarity">
    <text evidence="3">Belongs to the G-protein coupled receptor 4 family.</text>
</comment>
<feature type="chain" id="PRO_0000195073" description="Pheromone B beta 1 receptor">
    <location>
        <begin position="1"/>
        <end position="541"/>
    </location>
</feature>
<feature type="topological domain" description="Extracellular" evidence="1">
    <location>
        <begin position="1"/>
        <end position="3"/>
    </location>
</feature>
<feature type="transmembrane region" description="Helical" evidence="1">
    <location>
        <begin position="4"/>
        <end position="24"/>
    </location>
</feature>
<feature type="topological domain" description="Cytoplasmic" evidence="1">
    <location>
        <begin position="25"/>
        <end position="33"/>
    </location>
</feature>
<feature type="transmembrane region" description="Helical" evidence="1">
    <location>
        <begin position="34"/>
        <end position="54"/>
    </location>
</feature>
<feature type="topological domain" description="Extracellular" evidence="1">
    <location>
        <begin position="55"/>
        <end position="69"/>
    </location>
</feature>
<feature type="transmembrane region" description="Helical" evidence="1">
    <location>
        <begin position="70"/>
        <end position="90"/>
    </location>
</feature>
<feature type="topological domain" description="Cytoplasmic" evidence="1">
    <location>
        <begin position="91"/>
        <end position="109"/>
    </location>
</feature>
<feature type="transmembrane region" description="Helical" evidence="1">
    <location>
        <begin position="110"/>
        <end position="130"/>
    </location>
</feature>
<feature type="topological domain" description="Extracellular" evidence="1">
    <location>
        <begin position="131"/>
        <end position="150"/>
    </location>
</feature>
<feature type="transmembrane region" description="Helical" evidence="1">
    <location>
        <begin position="151"/>
        <end position="171"/>
    </location>
</feature>
<feature type="topological domain" description="Cytoplasmic" evidence="1">
    <location>
        <begin position="172"/>
        <end position="205"/>
    </location>
</feature>
<feature type="transmembrane region" description="Helical" evidence="1">
    <location>
        <begin position="206"/>
        <end position="226"/>
    </location>
</feature>
<feature type="topological domain" description="Extracellular" evidence="1">
    <location>
        <begin position="227"/>
        <end position="264"/>
    </location>
</feature>
<feature type="transmembrane region" description="Helical" evidence="1">
    <location>
        <begin position="265"/>
        <end position="285"/>
    </location>
</feature>
<feature type="topological domain" description="Cytoplasmic" evidence="1">
    <location>
        <begin position="286"/>
        <end position="541"/>
    </location>
</feature>
<feature type="region of interest" description="Disordered" evidence="2">
    <location>
        <begin position="364"/>
        <end position="393"/>
    </location>
</feature>
<feature type="region of interest" description="Disordered" evidence="2">
    <location>
        <begin position="414"/>
        <end position="541"/>
    </location>
</feature>
<feature type="compositionally biased region" description="Pro residues" evidence="2">
    <location>
        <begin position="372"/>
        <end position="385"/>
    </location>
</feature>
<feature type="compositionally biased region" description="Low complexity" evidence="2">
    <location>
        <begin position="420"/>
        <end position="429"/>
    </location>
</feature>
<feature type="compositionally biased region" description="Pro residues" evidence="2">
    <location>
        <begin position="467"/>
        <end position="478"/>
    </location>
</feature>
<feature type="compositionally biased region" description="Pro residues" evidence="2">
    <location>
        <begin position="493"/>
        <end position="502"/>
    </location>
</feature>
<evidence type="ECO:0000255" key="1"/>
<evidence type="ECO:0000256" key="2">
    <source>
        <dbReference type="SAM" id="MobiDB-lite"/>
    </source>
</evidence>
<evidence type="ECO:0000305" key="3"/>
<accession>P78741</accession>
<keyword id="KW-0297">G-protein coupled receptor</keyword>
<keyword id="KW-0472">Membrane</keyword>
<keyword id="KW-0589">Pheromone response</keyword>
<keyword id="KW-0675">Receptor</keyword>
<keyword id="KW-0807">Transducer</keyword>
<keyword id="KW-0812">Transmembrane</keyword>
<keyword id="KW-1133">Transmembrane helix</keyword>
<reference key="1">
    <citation type="journal article" date="1997" name="Genetics">
        <title>Multiple genes encoding pheromones and a pheromone receptor define the B beta 1 mating-type specificity in Schizophyllum commune.</title>
        <authorList>
            <person name="Vaillancourt L.J."/>
            <person name="Raudaskoski M."/>
            <person name="Specht C.A."/>
            <person name="Raper C.A."/>
        </authorList>
    </citation>
    <scope>NUCLEOTIDE SEQUENCE [GENOMIC DNA]</scope>
    <source>
        <strain>ATCC 44201 / CBS 340.81 / UVM 4-40 / 4-40</strain>
    </source>
</reference>
<reference key="2">
    <citation type="submission" date="2000-05" db="EMBL/GenBank/DDBJ databases">
        <authorList>
            <person name="Raper C.A."/>
        </authorList>
    </citation>
    <scope>SEQUENCE REVISION</scope>
</reference>